<protein>
    <recommendedName>
        <fullName evidence="1">DNA mismatch repair protein MutS</fullName>
    </recommendedName>
</protein>
<dbReference type="EMBL" id="AM180252">
    <property type="protein sequence ID" value="CAJ54292.1"/>
    <property type="molecule type" value="Genomic_DNA"/>
</dbReference>
<dbReference type="RefSeq" id="WP_011526318.1">
    <property type="nucleotide sequence ID" value="NC_008011.1"/>
</dbReference>
<dbReference type="SMR" id="Q1MRT4"/>
<dbReference type="STRING" id="363253.LI0236"/>
<dbReference type="KEGG" id="lip:LI0236"/>
<dbReference type="eggNOG" id="COG0249">
    <property type="taxonomic scope" value="Bacteria"/>
</dbReference>
<dbReference type="HOGENOM" id="CLU_002472_3_1_7"/>
<dbReference type="OrthoDB" id="9802448at2"/>
<dbReference type="Proteomes" id="UP000002430">
    <property type="component" value="Chromosome"/>
</dbReference>
<dbReference type="GO" id="GO:0005829">
    <property type="term" value="C:cytosol"/>
    <property type="evidence" value="ECO:0007669"/>
    <property type="project" value="TreeGrafter"/>
</dbReference>
<dbReference type="GO" id="GO:0005524">
    <property type="term" value="F:ATP binding"/>
    <property type="evidence" value="ECO:0007669"/>
    <property type="project" value="UniProtKB-UniRule"/>
</dbReference>
<dbReference type="GO" id="GO:0140664">
    <property type="term" value="F:ATP-dependent DNA damage sensor activity"/>
    <property type="evidence" value="ECO:0007669"/>
    <property type="project" value="InterPro"/>
</dbReference>
<dbReference type="GO" id="GO:0003684">
    <property type="term" value="F:damaged DNA binding"/>
    <property type="evidence" value="ECO:0007669"/>
    <property type="project" value="UniProtKB-UniRule"/>
</dbReference>
<dbReference type="GO" id="GO:0030983">
    <property type="term" value="F:mismatched DNA binding"/>
    <property type="evidence" value="ECO:0007669"/>
    <property type="project" value="InterPro"/>
</dbReference>
<dbReference type="GO" id="GO:0006298">
    <property type="term" value="P:mismatch repair"/>
    <property type="evidence" value="ECO:0007669"/>
    <property type="project" value="UniProtKB-UniRule"/>
</dbReference>
<dbReference type="CDD" id="cd03284">
    <property type="entry name" value="ABC_MutS1"/>
    <property type="match status" value="1"/>
</dbReference>
<dbReference type="FunFam" id="3.40.1170.10:FF:000001">
    <property type="entry name" value="DNA mismatch repair protein MutS"/>
    <property type="match status" value="1"/>
</dbReference>
<dbReference type="FunFam" id="3.40.50.300:FF:000870">
    <property type="entry name" value="MutS protein homolog 4"/>
    <property type="match status" value="1"/>
</dbReference>
<dbReference type="Gene3D" id="1.10.1420.10">
    <property type="match status" value="2"/>
</dbReference>
<dbReference type="Gene3D" id="3.40.1170.10">
    <property type="entry name" value="DNA repair protein MutS, domain I"/>
    <property type="match status" value="1"/>
</dbReference>
<dbReference type="Gene3D" id="3.30.420.110">
    <property type="entry name" value="MutS, connector domain"/>
    <property type="match status" value="1"/>
</dbReference>
<dbReference type="Gene3D" id="3.40.50.300">
    <property type="entry name" value="P-loop containing nucleotide triphosphate hydrolases"/>
    <property type="match status" value="1"/>
</dbReference>
<dbReference type="HAMAP" id="MF_00096">
    <property type="entry name" value="MutS"/>
    <property type="match status" value="1"/>
</dbReference>
<dbReference type="InterPro" id="IPR005748">
    <property type="entry name" value="DNA_mismatch_repair_MutS"/>
</dbReference>
<dbReference type="InterPro" id="IPR007695">
    <property type="entry name" value="DNA_mismatch_repair_MutS-lik_N"/>
</dbReference>
<dbReference type="InterPro" id="IPR017261">
    <property type="entry name" value="DNA_mismatch_repair_MutS/MSH"/>
</dbReference>
<dbReference type="InterPro" id="IPR000432">
    <property type="entry name" value="DNA_mismatch_repair_MutS_C"/>
</dbReference>
<dbReference type="InterPro" id="IPR007861">
    <property type="entry name" value="DNA_mismatch_repair_MutS_clamp"/>
</dbReference>
<dbReference type="InterPro" id="IPR007696">
    <property type="entry name" value="DNA_mismatch_repair_MutS_core"/>
</dbReference>
<dbReference type="InterPro" id="IPR016151">
    <property type="entry name" value="DNA_mismatch_repair_MutS_N"/>
</dbReference>
<dbReference type="InterPro" id="IPR036187">
    <property type="entry name" value="DNA_mismatch_repair_MutS_sf"/>
</dbReference>
<dbReference type="InterPro" id="IPR007860">
    <property type="entry name" value="DNA_mmatch_repair_MutS_con_dom"/>
</dbReference>
<dbReference type="InterPro" id="IPR045076">
    <property type="entry name" value="MutS"/>
</dbReference>
<dbReference type="InterPro" id="IPR036678">
    <property type="entry name" value="MutS_con_dom_sf"/>
</dbReference>
<dbReference type="InterPro" id="IPR027417">
    <property type="entry name" value="P-loop_NTPase"/>
</dbReference>
<dbReference type="NCBIfam" id="TIGR01070">
    <property type="entry name" value="mutS1"/>
    <property type="match status" value="1"/>
</dbReference>
<dbReference type="NCBIfam" id="NF003810">
    <property type="entry name" value="PRK05399.1"/>
    <property type="match status" value="1"/>
</dbReference>
<dbReference type="PANTHER" id="PTHR11361:SF34">
    <property type="entry name" value="DNA MISMATCH REPAIR PROTEIN MSH1, MITOCHONDRIAL"/>
    <property type="match status" value="1"/>
</dbReference>
<dbReference type="PANTHER" id="PTHR11361">
    <property type="entry name" value="DNA MISMATCH REPAIR PROTEIN MUTS FAMILY MEMBER"/>
    <property type="match status" value="1"/>
</dbReference>
<dbReference type="Pfam" id="PF01624">
    <property type="entry name" value="MutS_I"/>
    <property type="match status" value="1"/>
</dbReference>
<dbReference type="Pfam" id="PF05188">
    <property type="entry name" value="MutS_II"/>
    <property type="match status" value="1"/>
</dbReference>
<dbReference type="Pfam" id="PF05192">
    <property type="entry name" value="MutS_III"/>
    <property type="match status" value="1"/>
</dbReference>
<dbReference type="Pfam" id="PF05190">
    <property type="entry name" value="MutS_IV"/>
    <property type="match status" value="1"/>
</dbReference>
<dbReference type="Pfam" id="PF00488">
    <property type="entry name" value="MutS_V"/>
    <property type="match status" value="1"/>
</dbReference>
<dbReference type="PIRSF" id="PIRSF037677">
    <property type="entry name" value="DNA_mis_repair_Msh6"/>
    <property type="match status" value="1"/>
</dbReference>
<dbReference type="SMART" id="SM00534">
    <property type="entry name" value="MUTSac"/>
    <property type="match status" value="1"/>
</dbReference>
<dbReference type="SMART" id="SM00533">
    <property type="entry name" value="MUTSd"/>
    <property type="match status" value="1"/>
</dbReference>
<dbReference type="SUPFAM" id="SSF55271">
    <property type="entry name" value="DNA repair protein MutS, domain I"/>
    <property type="match status" value="1"/>
</dbReference>
<dbReference type="SUPFAM" id="SSF53150">
    <property type="entry name" value="DNA repair protein MutS, domain II"/>
    <property type="match status" value="1"/>
</dbReference>
<dbReference type="SUPFAM" id="SSF48334">
    <property type="entry name" value="DNA repair protein MutS, domain III"/>
    <property type="match status" value="1"/>
</dbReference>
<dbReference type="SUPFAM" id="SSF52540">
    <property type="entry name" value="P-loop containing nucleoside triphosphate hydrolases"/>
    <property type="match status" value="1"/>
</dbReference>
<dbReference type="PROSITE" id="PS00486">
    <property type="entry name" value="DNA_MISMATCH_REPAIR_2"/>
    <property type="match status" value="1"/>
</dbReference>
<organism>
    <name type="scientific">Lawsonia intracellularis (strain PHE/MN1-00)</name>
    <dbReference type="NCBI Taxonomy" id="363253"/>
    <lineage>
        <taxon>Bacteria</taxon>
        <taxon>Pseudomonadati</taxon>
        <taxon>Thermodesulfobacteriota</taxon>
        <taxon>Desulfovibrionia</taxon>
        <taxon>Desulfovibrionales</taxon>
        <taxon>Desulfovibrionaceae</taxon>
        <taxon>Lawsonia</taxon>
    </lineage>
</organism>
<gene>
    <name evidence="1" type="primary">mutS</name>
    <name type="ordered locus">LI0236</name>
</gene>
<evidence type="ECO:0000255" key="1">
    <source>
        <dbReference type="HAMAP-Rule" id="MF_00096"/>
    </source>
</evidence>
<name>MUTS_LAWIP</name>
<sequence>MNESSHRITPMLEQYLSIKSNYPDTLLFYRMGDFYELFFEDAETAARELQIALTARNPRAENPVPMCGVPWHAADSYIHQLIQKGYKVALCEQTEDFRESKGLVQRKVTRVFTSATTTEETSLDPKTHTYLGAMYWDEEVNIGAFCWADVSTGLWTGIQVKKKSELWQWIQKILPKELLFPEKYELPATAKLIEIQFVPLPYKTHFEYPQAVKRLLQAQGVADLEALGLEKHTILVQACGALVAYLEQTQLQDVNHLMPFKPLDIGKYVILDEITEKNLELFKRVNGKKGVGTLIHVLDHTLTPMGGRLLEERLHHPWRDITTILENQSVLEWLILYKENMKKLQDALKAIYDLERLSTRIVLNRTSPKDLLALKNTLLILPRVKDALIVEINVKDNRYITIDESILSTMPTILRQLLTKWDNISDYAEKLDKALDENPPNSIVEGGLFKLGFNAELDELMDLLEHGESKLQALLEKEQKVNNLPRLKIGFNRVFGYYFELTKSAGTPPSHFVRRQTLANAERYTTEELKDLEERLLSATEKRNTLEYKLFQKLREELVSIRPRILFMASLIAQLDLWQSLADVAIRHNWNKPTLLTNNNIFIREGRHPVIESIIGKSVFVPNDLVMDETRRMLLITGPNMAGKSTVLRQTAIICLLAHMGSFVPATEAQIGICDRIFSRVGASDNLARGQSTFMVEMMETARILRQATSRSLVILDEIGRGTSTFDGLALAWAVAEDLVCKDHDGVRTLFATHYHELTALEEKLTGVHTMTIAIRHWNDELVFLYRLIPGPADRSYGIEVARLAGVPQSVIQRAKIILTQLEQTHQQPRSLLNLLPGVVQNANEELSKQDVKVVEHPVVTLLKEMNPETLTPLDALKSLVEWKLLYGTTHAT</sequence>
<proteinExistence type="inferred from homology"/>
<comment type="function">
    <text evidence="1">This protein is involved in the repair of mismatches in DNA. It is possible that it carries out the mismatch recognition step. This protein has a weak ATPase activity.</text>
</comment>
<comment type="similarity">
    <text evidence="1">Belongs to the DNA mismatch repair MutS family.</text>
</comment>
<reference key="1">
    <citation type="submission" date="2005-11" db="EMBL/GenBank/DDBJ databases">
        <title>The complete genome sequence of Lawsonia intracellularis: the causative agent of proliferative enteropathy.</title>
        <authorList>
            <person name="Kaur K."/>
            <person name="Zhang Q."/>
            <person name="Beckler D."/>
            <person name="Munir S."/>
            <person name="Li L."/>
            <person name="Kinsley K."/>
            <person name="Herron L."/>
            <person name="Peterson A."/>
            <person name="May B."/>
            <person name="Singh S."/>
            <person name="Gebhart C."/>
            <person name="Kapur V."/>
        </authorList>
    </citation>
    <scope>NUCLEOTIDE SEQUENCE [LARGE SCALE GENOMIC DNA]</scope>
    <source>
        <strain>PHE/MN1-00</strain>
    </source>
</reference>
<feature type="chain" id="PRO_1000008070" description="DNA mismatch repair protein MutS">
    <location>
        <begin position="1"/>
        <end position="893"/>
    </location>
</feature>
<feature type="binding site" evidence="1">
    <location>
        <begin position="638"/>
        <end position="645"/>
    </location>
    <ligand>
        <name>ATP</name>
        <dbReference type="ChEBI" id="CHEBI:30616"/>
    </ligand>
</feature>
<accession>Q1MRT4</accession>
<keyword id="KW-0067">ATP-binding</keyword>
<keyword id="KW-0227">DNA damage</keyword>
<keyword id="KW-0234">DNA repair</keyword>
<keyword id="KW-0238">DNA-binding</keyword>
<keyword id="KW-0547">Nucleotide-binding</keyword>
<keyword id="KW-1185">Reference proteome</keyword>